<organism>
    <name type="scientific">Streptococcus pneumoniae (strain Taiwan19F-14)</name>
    <dbReference type="NCBI Taxonomy" id="487213"/>
    <lineage>
        <taxon>Bacteria</taxon>
        <taxon>Bacillati</taxon>
        <taxon>Bacillota</taxon>
        <taxon>Bacilli</taxon>
        <taxon>Lactobacillales</taxon>
        <taxon>Streptococcaceae</taxon>
        <taxon>Streptococcus</taxon>
    </lineage>
</organism>
<gene>
    <name evidence="1" type="primary">tmk</name>
    <name type="ordered locus">SPT_1265</name>
</gene>
<feature type="chain" id="PRO_1000123595" description="Thymidylate kinase">
    <location>
        <begin position="1"/>
        <end position="212"/>
    </location>
</feature>
<feature type="binding site" evidence="1">
    <location>
        <begin position="11"/>
        <end position="18"/>
    </location>
    <ligand>
        <name>ATP</name>
        <dbReference type="ChEBI" id="CHEBI:30616"/>
    </ligand>
</feature>
<reference key="1">
    <citation type="journal article" date="2010" name="Genome Biol.">
        <title>Structure and dynamics of the pan-genome of Streptococcus pneumoniae and closely related species.</title>
        <authorList>
            <person name="Donati C."/>
            <person name="Hiller N.L."/>
            <person name="Tettelin H."/>
            <person name="Muzzi A."/>
            <person name="Croucher N.J."/>
            <person name="Angiuoli S.V."/>
            <person name="Oggioni M."/>
            <person name="Dunning Hotopp J.C."/>
            <person name="Hu F.Z."/>
            <person name="Riley D.R."/>
            <person name="Covacci A."/>
            <person name="Mitchell T.J."/>
            <person name="Bentley S.D."/>
            <person name="Kilian M."/>
            <person name="Ehrlich G.D."/>
            <person name="Rappuoli R."/>
            <person name="Moxon E.R."/>
            <person name="Masignani V."/>
        </authorList>
    </citation>
    <scope>NUCLEOTIDE SEQUENCE [LARGE SCALE GENOMIC DNA]</scope>
    <source>
        <strain>Taiwan19F-14</strain>
    </source>
</reference>
<keyword id="KW-0067">ATP-binding</keyword>
<keyword id="KW-0418">Kinase</keyword>
<keyword id="KW-0545">Nucleotide biosynthesis</keyword>
<keyword id="KW-0547">Nucleotide-binding</keyword>
<keyword id="KW-0808">Transferase</keyword>
<name>KTHY_STRZT</name>
<proteinExistence type="inferred from homology"/>
<evidence type="ECO:0000255" key="1">
    <source>
        <dbReference type="HAMAP-Rule" id="MF_00165"/>
    </source>
</evidence>
<protein>
    <recommendedName>
        <fullName evidence="1">Thymidylate kinase</fullName>
        <ecNumber evidence="1">2.7.4.9</ecNumber>
    </recommendedName>
    <alternativeName>
        <fullName evidence="1">dTMP kinase</fullName>
    </alternativeName>
</protein>
<dbReference type="EC" id="2.7.4.9" evidence="1"/>
<dbReference type="EMBL" id="CP000921">
    <property type="protein sequence ID" value="ACO22917.1"/>
    <property type="molecule type" value="Genomic_DNA"/>
</dbReference>
<dbReference type="RefSeq" id="WP_000033363.1">
    <property type="nucleotide sequence ID" value="NC_012469.1"/>
</dbReference>
<dbReference type="SMR" id="C1CRV9"/>
<dbReference type="KEGG" id="snt:SPT_1265"/>
<dbReference type="HOGENOM" id="CLU_049131_0_2_9"/>
<dbReference type="GO" id="GO:0005829">
    <property type="term" value="C:cytosol"/>
    <property type="evidence" value="ECO:0007669"/>
    <property type="project" value="TreeGrafter"/>
</dbReference>
<dbReference type="GO" id="GO:0005524">
    <property type="term" value="F:ATP binding"/>
    <property type="evidence" value="ECO:0007669"/>
    <property type="project" value="UniProtKB-UniRule"/>
</dbReference>
<dbReference type="GO" id="GO:0004798">
    <property type="term" value="F:dTMP kinase activity"/>
    <property type="evidence" value="ECO:0007669"/>
    <property type="project" value="UniProtKB-UniRule"/>
</dbReference>
<dbReference type="GO" id="GO:0006233">
    <property type="term" value="P:dTDP biosynthetic process"/>
    <property type="evidence" value="ECO:0007669"/>
    <property type="project" value="InterPro"/>
</dbReference>
<dbReference type="GO" id="GO:0006235">
    <property type="term" value="P:dTTP biosynthetic process"/>
    <property type="evidence" value="ECO:0007669"/>
    <property type="project" value="UniProtKB-UniRule"/>
</dbReference>
<dbReference type="GO" id="GO:0006227">
    <property type="term" value="P:dUDP biosynthetic process"/>
    <property type="evidence" value="ECO:0007669"/>
    <property type="project" value="TreeGrafter"/>
</dbReference>
<dbReference type="CDD" id="cd01672">
    <property type="entry name" value="TMPK"/>
    <property type="match status" value="1"/>
</dbReference>
<dbReference type="FunFam" id="3.40.50.300:FF:000225">
    <property type="entry name" value="Thymidylate kinase"/>
    <property type="match status" value="1"/>
</dbReference>
<dbReference type="Gene3D" id="3.40.50.300">
    <property type="entry name" value="P-loop containing nucleotide triphosphate hydrolases"/>
    <property type="match status" value="1"/>
</dbReference>
<dbReference type="HAMAP" id="MF_00165">
    <property type="entry name" value="Thymidylate_kinase"/>
    <property type="match status" value="1"/>
</dbReference>
<dbReference type="InterPro" id="IPR027417">
    <property type="entry name" value="P-loop_NTPase"/>
</dbReference>
<dbReference type="InterPro" id="IPR039430">
    <property type="entry name" value="Thymidylate_kin-like_dom"/>
</dbReference>
<dbReference type="InterPro" id="IPR018095">
    <property type="entry name" value="Thymidylate_kin_CS"/>
</dbReference>
<dbReference type="InterPro" id="IPR018094">
    <property type="entry name" value="Thymidylate_kinase"/>
</dbReference>
<dbReference type="NCBIfam" id="TIGR00041">
    <property type="entry name" value="DTMP_kinase"/>
    <property type="match status" value="1"/>
</dbReference>
<dbReference type="PANTHER" id="PTHR10344">
    <property type="entry name" value="THYMIDYLATE KINASE"/>
    <property type="match status" value="1"/>
</dbReference>
<dbReference type="PANTHER" id="PTHR10344:SF4">
    <property type="entry name" value="UMP-CMP KINASE 2, MITOCHONDRIAL"/>
    <property type="match status" value="1"/>
</dbReference>
<dbReference type="Pfam" id="PF02223">
    <property type="entry name" value="Thymidylate_kin"/>
    <property type="match status" value="1"/>
</dbReference>
<dbReference type="SUPFAM" id="SSF52540">
    <property type="entry name" value="P-loop containing nucleoside triphosphate hydrolases"/>
    <property type="match status" value="1"/>
</dbReference>
<dbReference type="PROSITE" id="PS01331">
    <property type="entry name" value="THYMIDYLATE_KINASE"/>
    <property type="match status" value="1"/>
</dbReference>
<accession>C1CRV9</accession>
<sequence>MSKGFLVSLEGPEGAGKTSVLEALLPILEEKGVEVLTTREPGGVLIGEKIREVILDPSHTQMDAKTELLLYIASRRQHLVEKVLPALEAGKLVIMDRFIDSSVAYQGFGRGLDIEAIDWLNQFATDGLKPDLTLYFDIEVEEGLARIAANSDREVNRLDLEGLDLHKKVRQGYLSLLDKEGNRIVKIDASLPLEQVVETTKSVLFDGMGLAK</sequence>
<comment type="function">
    <text evidence="1">Phosphorylation of dTMP to form dTDP in both de novo and salvage pathways of dTTP synthesis.</text>
</comment>
<comment type="catalytic activity">
    <reaction evidence="1">
        <text>dTMP + ATP = dTDP + ADP</text>
        <dbReference type="Rhea" id="RHEA:13517"/>
        <dbReference type="ChEBI" id="CHEBI:30616"/>
        <dbReference type="ChEBI" id="CHEBI:58369"/>
        <dbReference type="ChEBI" id="CHEBI:63528"/>
        <dbReference type="ChEBI" id="CHEBI:456216"/>
        <dbReference type="EC" id="2.7.4.9"/>
    </reaction>
</comment>
<comment type="similarity">
    <text evidence="1">Belongs to the thymidylate kinase family.</text>
</comment>